<keyword id="KW-0804">Transcription</keyword>
<keyword id="KW-0889">Transcription antitermination</keyword>
<keyword id="KW-0805">Transcription regulation</keyword>
<keyword id="KW-0806">Transcription termination</keyword>
<evidence type="ECO:0000250" key="1"/>
<evidence type="ECO:0000255" key="2">
    <source>
        <dbReference type="HAMAP-Rule" id="MF_00948"/>
    </source>
</evidence>
<comment type="function">
    <text evidence="2">Participates in transcription elongation, termination and antitermination.</text>
</comment>
<comment type="similarity">
    <text evidence="2">Belongs to the NusG family.</text>
</comment>
<protein>
    <recommendedName>
        <fullName evidence="2">Transcription termination/antitermination protein NusG</fullName>
    </recommendedName>
</protein>
<sequence length="182" mass="20709">MSEAPKKRWYVVQAFSGFEGRVAQSLREHIKMHGMEELFGEVLVPTEEVVEMRAGQRRKSERKFFPGYVLVQMIMNDESWHLVRSVPRVMGFIGGTSDRPAPITDKEADAILNRLEKASEAPRPRTMYEAGEVVRVNEGPFADFNGTVEEVDYEKSRLKVSVSIFGRATPVELEFGQVEKLD</sequence>
<organism>
    <name type="scientific">Vibrio parahaemolyticus serotype O3:K6 (strain RIMD 2210633)</name>
    <dbReference type="NCBI Taxonomy" id="223926"/>
    <lineage>
        <taxon>Bacteria</taxon>
        <taxon>Pseudomonadati</taxon>
        <taxon>Pseudomonadota</taxon>
        <taxon>Gammaproteobacteria</taxon>
        <taxon>Vibrionales</taxon>
        <taxon>Vibrionaceae</taxon>
        <taxon>Vibrio</taxon>
    </lineage>
</organism>
<accession>Q87KP9</accession>
<gene>
    <name evidence="2" type="primary">nusG</name>
    <name type="ordered locus">VP2927</name>
</gene>
<proteinExistence type="inferred from homology"/>
<name>NUSG_VIBPA</name>
<reference key="1">
    <citation type="journal article" date="2003" name="Lancet">
        <title>Genome sequence of Vibrio parahaemolyticus: a pathogenic mechanism distinct from that of V. cholerae.</title>
        <authorList>
            <person name="Makino K."/>
            <person name="Oshima K."/>
            <person name="Kurokawa K."/>
            <person name="Yokoyama K."/>
            <person name="Uda T."/>
            <person name="Tagomori K."/>
            <person name="Iijima Y."/>
            <person name="Najima M."/>
            <person name="Nakano M."/>
            <person name="Yamashita A."/>
            <person name="Kubota Y."/>
            <person name="Kimura S."/>
            <person name="Yasunaga T."/>
            <person name="Honda T."/>
            <person name="Shinagawa H."/>
            <person name="Hattori M."/>
            <person name="Iida T."/>
        </authorList>
    </citation>
    <scope>NUCLEOTIDE SEQUENCE [LARGE SCALE GENOMIC DNA]</scope>
    <source>
        <strain>RIMD 2210633</strain>
    </source>
</reference>
<feature type="initiator methionine" description="Removed" evidence="1">
    <location>
        <position position="1"/>
    </location>
</feature>
<feature type="chain" id="PRO_0000113969" description="Transcription termination/antitermination protein NusG">
    <location>
        <begin position="2"/>
        <end position="182"/>
    </location>
</feature>
<feature type="domain" description="KOW" evidence="2">
    <location>
        <begin position="131"/>
        <end position="161"/>
    </location>
</feature>
<dbReference type="EMBL" id="BA000031">
    <property type="protein sequence ID" value="BAC61190.1"/>
    <property type="molecule type" value="Genomic_DNA"/>
</dbReference>
<dbReference type="RefSeq" id="NP_799306.1">
    <property type="nucleotide sequence ID" value="NC_004603.1"/>
</dbReference>
<dbReference type="RefSeq" id="WP_005384681.1">
    <property type="nucleotide sequence ID" value="NC_004603.1"/>
</dbReference>
<dbReference type="SMR" id="Q87KP9"/>
<dbReference type="GeneID" id="75166270"/>
<dbReference type="KEGG" id="vpa:VP2927"/>
<dbReference type="PATRIC" id="fig|223926.6.peg.2815"/>
<dbReference type="eggNOG" id="COG0250">
    <property type="taxonomic scope" value="Bacteria"/>
</dbReference>
<dbReference type="HOGENOM" id="CLU_067287_1_0_6"/>
<dbReference type="Proteomes" id="UP000002493">
    <property type="component" value="Chromosome 1"/>
</dbReference>
<dbReference type="GO" id="GO:0005829">
    <property type="term" value="C:cytosol"/>
    <property type="evidence" value="ECO:0007669"/>
    <property type="project" value="TreeGrafter"/>
</dbReference>
<dbReference type="GO" id="GO:0006353">
    <property type="term" value="P:DNA-templated transcription termination"/>
    <property type="evidence" value="ECO:0007669"/>
    <property type="project" value="UniProtKB-UniRule"/>
</dbReference>
<dbReference type="GO" id="GO:0032784">
    <property type="term" value="P:regulation of DNA-templated transcription elongation"/>
    <property type="evidence" value="ECO:0007669"/>
    <property type="project" value="InterPro"/>
</dbReference>
<dbReference type="GO" id="GO:0031564">
    <property type="term" value="P:transcription antitermination"/>
    <property type="evidence" value="ECO:0007669"/>
    <property type="project" value="UniProtKB-UniRule"/>
</dbReference>
<dbReference type="GO" id="GO:0140673">
    <property type="term" value="P:transcription elongation-coupled chromatin remodeling"/>
    <property type="evidence" value="ECO:0007669"/>
    <property type="project" value="InterPro"/>
</dbReference>
<dbReference type="CDD" id="cd06091">
    <property type="entry name" value="KOW_NusG"/>
    <property type="match status" value="1"/>
</dbReference>
<dbReference type="CDD" id="cd09891">
    <property type="entry name" value="NGN_Bact_1"/>
    <property type="match status" value="1"/>
</dbReference>
<dbReference type="FunFam" id="2.30.30.30:FF:000002">
    <property type="entry name" value="Transcription termination/antitermination factor NusG"/>
    <property type="match status" value="1"/>
</dbReference>
<dbReference type="FunFam" id="3.30.70.940:FF:000001">
    <property type="entry name" value="Transcription termination/antitermination protein NusG"/>
    <property type="match status" value="1"/>
</dbReference>
<dbReference type="Gene3D" id="2.30.30.30">
    <property type="match status" value="1"/>
</dbReference>
<dbReference type="Gene3D" id="3.30.70.940">
    <property type="entry name" value="NusG, N-terminal domain"/>
    <property type="match status" value="1"/>
</dbReference>
<dbReference type="HAMAP" id="MF_00948">
    <property type="entry name" value="NusG"/>
    <property type="match status" value="1"/>
</dbReference>
<dbReference type="InterPro" id="IPR005824">
    <property type="entry name" value="KOW"/>
</dbReference>
<dbReference type="InterPro" id="IPR047050">
    <property type="entry name" value="NGN"/>
</dbReference>
<dbReference type="InterPro" id="IPR006645">
    <property type="entry name" value="NGN-like_dom"/>
</dbReference>
<dbReference type="InterPro" id="IPR036735">
    <property type="entry name" value="NGN_dom_sf"/>
</dbReference>
<dbReference type="InterPro" id="IPR043425">
    <property type="entry name" value="NusG-like"/>
</dbReference>
<dbReference type="InterPro" id="IPR014722">
    <property type="entry name" value="Rib_uL2_dom2"/>
</dbReference>
<dbReference type="InterPro" id="IPR001062">
    <property type="entry name" value="Transcrpt_antiterm_NusG"/>
</dbReference>
<dbReference type="InterPro" id="IPR015869">
    <property type="entry name" value="Transcrpt_antiterm_NusG_bac_CS"/>
</dbReference>
<dbReference type="InterPro" id="IPR008991">
    <property type="entry name" value="Translation_prot_SH3-like_sf"/>
</dbReference>
<dbReference type="NCBIfam" id="TIGR00922">
    <property type="entry name" value="nusG"/>
    <property type="match status" value="1"/>
</dbReference>
<dbReference type="PANTHER" id="PTHR30265">
    <property type="entry name" value="RHO-INTERACTING TRANSCRIPTION TERMINATION FACTOR NUSG"/>
    <property type="match status" value="1"/>
</dbReference>
<dbReference type="PANTHER" id="PTHR30265:SF2">
    <property type="entry name" value="TRANSCRIPTION TERMINATION_ANTITERMINATION PROTEIN NUSG"/>
    <property type="match status" value="1"/>
</dbReference>
<dbReference type="Pfam" id="PF00467">
    <property type="entry name" value="KOW"/>
    <property type="match status" value="1"/>
</dbReference>
<dbReference type="Pfam" id="PF02357">
    <property type="entry name" value="NusG"/>
    <property type="match status" value="1"/>
</dbReference>
<dbReference type="PRINTS" id="PR00338">
    <property type="entry name" value="NUSGTNSCPFCT"/>
</dbReference>
<dbReference type="SMART" id="SM00739">
    <property type="entry name" value="KOW"/>
    <property type="match status" value="1"/>
</dbReference>
<dbReference type="SMART" id="SM00738">
    <property type="entry name" value="NGN"/>
    <property type="match status" value="1"/>
</dbReference>
<dbReference type="SUPFAM" id="SSF82679">
    <property type="entry name" value="N-utilization substance G protein NusG, N-terminal domain"/>
    <property type="match status" value="1"/>
</dbReference>
<dbReference type="SUPFAM" id="SSF50104">
    <property type="entry name" value="Translation proteins SH3-like domain"/>
    <property type="match status" value="1"/>
</dbReference>
<dbReference type="PROSITE" id="PS01014">
    <property type="entry name" value="NUSG"/>
    <property type="match status" value="1"/>
</dbReference>